<name>CU082_HUMAN</name>
<reference key="1">
    <citation type="journal article" date="2002" name="Genomics">
        <title>Nineteen additional unpredicted transcripts from human chromosome 21.</title>
        <authorList>
            <person name="Reymond A."/>
            <person name="Camargo A.A."/>
            <person name="Deutsch S."/>
            <person name="Stevenson B.J."/>
            <person name="Parmigiani R.B."/>
            <person name="Ucla C."/>
            <person name="Bettoni F."/>
            <person name="Rossier C."/>
            <person name="Lyle R."/>
            <person name="Guipponi M."/>
            <person name="de Souza S."/>
            <person name="Iseli C."/>
            <person name="Jongeneel C.V."/>
            <person name="Bucher P."/>
            <person name="Simpson A.J.G."/>
            <person name="Antonarakis S.E."/>
        </authorList>
    </citation>
    <scope>NUCLEOTIDE SEQUENCE [MRNA]</scope>
    <scope>TISSUE SPECIFICITY</scope>
</reference>
<reference key="2">
    <citation type="journal article" date="2000" name="Nature">
        <title>The DNA sequence of human chromosome 21.</title>
        <authorList>
            <person name="Hattori M."/>
            <person name="Fujiyama A."/>
            <person name="Taylor T.D."/>
            <person name="Watanabe H."/>
            <person name="Yada T."/>
            <person name="Park H.-S."/>
            <person name="Toyoda A."/>
            <person name="Ishii K."/>
            <person name="Totoki Y."/>
            <person name="Choi D.-K."/>
            <person name="Groner Y."/>
            <person name="Soeda E."/>
            <person name="Ohki M."/>
            <person name="Takagi T."/>
            <person name="Sakaki Y."/>
            <person name="Taudien S."/>
            <person name="Blechschmidt K."/>
            <person name="Polley A."/>
            <person name="Menzel U."/>
            <person name="Delabar J."/>
            <person name="Kumpf K."/>
            <person name="Lehmann R."/>
            <person name="Patterson D."/>
            <person name="Reichwald K."/>
            <person name="Rump A."/>
            <person name="Schillhabel M."/>
            <person name="Schudy A."/>
            <person name="Zimmermann W."/>
            <person name="Rosenthal A."/>
            <person name="Kudoh J."/>
            <person name="Shibuya K."/>
            <person name="Kawasaki K."/>
            <person name="Asakawa S."/>
            <person name="Shintani A."/>
            <person name="Sasaki T."/>
            <person name="Nagamine K."/>
            <person name="Mitsuyama S."/>
            <person name="Antonarakis S.E."/>
            <person name="Minoshima S."/>
            <person name="Shimizu N."/>
            <person name="Nordsiek G."/>
            <person name="Hornischer K."/>
            <person name="Brandt P."/>
            <person name="Scharfe M."/>
            <person name="Schoen O."/>
            <person name="Desario A."/>
            <person name="Reichelt J."/>
            <person name="Kauer G."/>
            <person name="Bloecker H."/>
            <person name="Ramser J."/>
            <person name="Beck A."/>
            <person name="Klages S."/>
            <person name="Hennig S."/>
            <person name="Riesselmann L."/>
            <person name="Dagand E."/>
            <person name="Wehrmeyer S."/>
            <person name="Borzym K."/>
            <person name="Gardiner K."/>
            <person name="Nizetic D."/>
            <person name="Francis F."/>
            <person name="Lehrach H."/>
            <person name="Reinhardt R."/>
            <person name="Yaspo M.-L."/>
        </authorList>
    </citation>
    <scope>NUCLEOTIDE SEQUENCE [LARGE SCALE GENOMIC DNA]</scope>
</reference>
<reference key="3">
    <citation type="journal article" date="2004" name="Genome Res.">
        <title>The status, quality, and expansion of the NIH full-length cDNA project: the Mammalian Gene Collection (MGC).</title>
        <authorList>
            <consortium name="The MGC Project Team"/>
        </authorList>
    </citation>
    <scope>NUCLEOTIDE SEQUENCE [LARGE SCALE MRNA]</scope>
    <source>
        <tissue>Brain</tissue>
    </source>
</reference>
<keyword id="KW-1185">Reference proteome</keyword>
<sequence>MRQGCKFRGSSQKIRWSRSPPSSLLHTLRPRLLSAEITLQTNLPLQSPCCRLCFLRGTQAKTLK</sequence>
<accession>P59036</accession>
<accession>Q52LY1</accession>
<organism>
    <name type="scientific">Homo sapiens</name>
    <name type="common">Human</name>
    <dbReference type="NCBI Taxonomy" id="9606"/>
    <lineage>
        <taxon>Eukaryota</taxon>
        <taxon>Metazoa</taxon>
        <taxon>Chordata</taxon>
        <taxon>Craniata</taxon>
        <taxon>Vertebrata</taxon>
        <taxon>Euteleostomi</taxon>
        <taxon>Mammalia</taxon>
        <taxon>Eutheria</taxon>
        <taxon>Euarchontoglires</taxon>
        <taxon>Primates</taxon>
        <taxon>Haplorrhini</taxon>
        <taxon>Catarrhini</taxon>
        <taxon>Hominidae</taxon>
        <taxon>Homo</taxon>
    </lineage>
</organism>
<gene>
    <name type="primary">LINC00310</name>
    <name type="synonym">C21orf82</name>
    <name type="synonym">NCRNA00310</name>
</gene>
<proteinExistence type="uncertain"/>
<comment type="tissue specificity">
    <text evidence="1">Widely expressed; not found in breast.</text>
</comment>
<comment type="caution">
    <text evidence="2">Product of a dubious CDS prediction. May be a non-coding RNA.</text>
</comment>
<protein>
    <recommendedName>
        <fullName>Putative uncharacterized protein encoded by LINC00310</fullName>
    </recommendedName>
</protein>
<dbReference type="EMBL" id="AF426258">
    <property type="protein sequence ID" value="AAM53514.1"/>
    <property type="molecule type" value="mRNA"/>
</dbReference>
<dbReference type="EMBL" id="AP000316">
    <property type="status" value="NOT_ANNOTATED_CDS"/>
    <property type="molecule type" value="Genomic_DNA"/>
</dbReference>
<dbReference type="EMBL" id="BC093749">
    <property type="status" value="NOT_ANNOTATED_CDS"/>
    <property type="molecule type" value="mRNA"/>
</dbReference>
<dbReference type="EMBL" id="BC111996">
    <property type="status" value="NOT_ANNOTATED_CDS"/>
    <property type="molecule type" value="mRNA"/>
</dbReference>
<dbReference type="GlyGen" id="P59036">
    <property type="glycosylation" value="1 site, 1 O-linked glycan (1 site)"/>
</dbReference>
<dbReference type="BioMuta" id="HGNC:16414"/>
<dbReference type="AGR" id="HGNC:16414"/>
<dbReference type="GeneCards" id="LINC00310"/>
<dbReference type="HGNC" id="HGNC:16414">
    <property type="gene designation" value="LINC00310"/>
</dbReference>
<dbReference type="neXtProt" id="NX_P59036"/>
<dbReference type="InParanoid" id="P59036"/>
<dbReference type="PAN-GO" id="P59036">
    <property type="GO annotations" value="0 GO annotations based on evolutionary models"/>
</dbReference>
<dbReference type="PathwayCommons" id="P59036"/>
<dbReference type="ChiTaRS" id="LINC00310">
    <property type="organism name" value="human"/>
</dbReference>
<dbReference type="Pharos" id="P59036">
    <property type="development level" value="Tdark"/>
</dbReference>
<dbReference type="Proteomes" id="UP000005640">
    <property type="component" value="Unplaced"/>
</dbReference>
<dbReference type="RNAct" id="P59036">
    <property type="molecule type" value="protein"/>
</dbReference>
<evidence type="ECO:0000269" key="1">
    <source>
    </source>
</evidence>
<evidence type="ECO:0000305" key="2"/>
<feature type="chain" id="PRO_0000079534" description="Putative uncharacterized protein encoded by LINC00310">
    <location>
        <begin position="1"/>
        <end position="64"/>
    </location>
</feature>